<dbReference type="EMBL" id="CP000480">
    <property type="protein sequence ID" value="ABK72170.1"/>
    <property type="molecule type" value="Genomic_DNA"/>
</dbReference>
<dbReference type="EMBL" id="CP001663">
    <property type="protein sequence ID" value="AFP38309.1"/>
    <property type="molecule type" value="Genomic_DNA"/>
</dbReference>
<dbReference type="RefSeq" id="WP_011727973.1">
    <property type="nucleotide sequence ID" value="NZ_SIJM01000020.1"/>
</dbReference>
<dbReference type="RefSeq" id="YP_886242.1">
    <property type="nucleotide sequence ID" value="NC_008596.1"/>
</dbReference>
<dbReference type="SMR" id="A0QTK4"/>
<dbReference type="STRING" id="246196.MSMEG_1876"/>
<dbReference type="PaxDb" id="246196-MSMEI_1837"/>
<dbReference type="GeneID" id="93456689"/>
<dbReference type="KEGG" id="msb:LJ00_09365"/>
<dbReference type="KEGG" id="msg:MSMEI_1837"/>
<dbReference type="KEGG" id="msm:MSMEG_1876"/>
<dbReference type="PATRIC" id="fig|246196.19.peg.1858"/>
<dbReference type="eggNOG" id="COG5401">
    <property type="taxonomic scope" value="Bacteria"/>
</dbReference>
<dbReference type="OrthoDB" id="3226781at2"/>
<dbReference type="Proteomes" id="UP000000757">
    <property type="component" value="Chromosome"/>
</dbReference>
<dbReference type="Proteomes" id="UP000006158">
    <property type="component" value="Chromosome"/>
</dbReference>
<dbReference type="GO" id="GO:0005576">
    <property type="term" value="C:extracellular region"/>
    <property type="evidence" value="ECO:0007669"/>
    <property type="project" value="UniProtKB-KW"/>
</dbReference>
<dbReference type="GO" id="GO:0005886">
    <property type="term" value="C:plasma membrane"/>
    <property type="evidence" value="ECO:0007669"/>
    <property type="project" value="UniProtKB-SubCell"/>
</dbReference>
<dbReference type="HAMAP" id="MF_01373">
    <property type="entry name" value="LpqB_lipoprot"/>
    <property type="match status" value="1"/>
</dbReference>
<dbReference type="InterPro" id="IPR019606">
    <property type="entry name" value="GerMN"/>
</dbReference>
<dbReference type="InterPro" id="IPR023959">
    <property type="entry name" value="Lipoprotein_LpqB"/>
</dbReference>
<dbReference type="InterPro" id="IPR018910">
    <property type="entry name" value="Lipoprotein_LpqB_C"/>
</dbReference>
<dbReference type="NCBIfam" id="NF010141">
    <property type="entry name" value="PRK13616.1"/>
    <property type="match status" value="1"/>
</dbReference>
<dbReference type="Pfam" id="PF10646">
    <property type="entry name" value="Germane"/>
    <property type="match status" value="1"/>
</dbReference>
<dbReference type="Pfam" id="PF10647">
    <property type="entry name" value="Gmad1"/>
    <property type="match status" value="1"/>
</dbReference>
<dbReference type="SMART" id="SM00909">
    <property type="entry name" value="Germane"/>
    <property type="match status" value="1"/>
</dbReference>
<dbReference type="PROSITE" id="PS51257">
    <property type="entry name" value="PROKAR_LIPOPROTEIN"/>
    <property type="match status" value="1"/>
</dbReference>
<sequence length="585" mass="61398">MKRLLTVLVVGLVALVSGCAGIPSSSSPQAIGTVERPAPPSLPKPTPDMDPDVLLREFLKATADPANRHLAARQFLTESASSAWDDAGSALLIDRVVFVETRSTDRVSVSMRADILGSLSDLGVFETGEGALPDPGPIELVKTSGGWRIDRLPNGVFLDWQQFQATYKRYTLYFVDPTGTTVVPDPRYVAVSDPDQLATELVSKLIAGPRPEMERSVRNLLDPPLKLRGPVTRADGGKTGVGRGYGGARIDLENLSASDPHSRQLLAAQLIWTLSRAGVAGPYVINVDGAPLDDRFADGWETSDVAATDPGAAPGAAAGLHALVNGSLVSLDGQRAPRVPGAFGQAPHQVSASVSRNGQDAASVVAPPGAPDPAATLWIGPLGGSTVQAMEGRTLSRPSWSLDQAVWVVADGINVVRAIRDASGTPARIPVDSSAVSSRYPGPISDLQLSRDGTRAAMVIEGQVILAGIEQTQDGRFLLTYPRRLGFGLGNSAVSLSWRTGDDIVVSRTDPEHPVSYVNLDGVNSDAPSRNLVMPVSVVAANPSTVYVADQRGVKQLSASADEENSGWVEVSPLMVPGSLPVLPG</sequence>
<name>LPQB_MYCS2</name>
<accession>A0QTK4</accession>
<accession>I7G6N1</accession>
<keyword id="KW-1003">Cell membrane</keyword>
<keyword id="KW-0134">Cell wall</keyword>
<keyword id="KW-0449">Lipoprotein</keyword>
<keyword id="KW-0472">Membrane</keyword>
<keyword id="KW-0564">Palmitate</keyword>
<keyword id="KW-1185">Reference proteome</keyword>
<keyword id="KW-0964">Secreted</keyword>
<keyword id="KW-0732">Signal</keyword>
<gene>
    <name evidence="1" type="primary">lpqB</name>
    <name type="ordered locus">MSMEG_1876</name>
    <name type="ordered locus">MSMEI_1837</name>
</gene>
<protein>
    <recommendedName>
        <fullName evidence="1">Lipoprotein LpqB</fullName>
    </recommendedName>
</protein>
<proteinExistence type="inferred from homology"/>
<comment type="function">
    <text evidence="3">May modulate activity of the MtrAB system in controlling homeostasis of the cell wall and cell division.</text>
</comment>
<comment type="subunit">
    <text>Interacts with MtrB, probably extracytoplasmically via its sensor domain.</text>
</comment>
<comment type="subcellular location">
    <subcellularLocation>
        <location evidence="4">Cell membrane</location>
        <topology evidence="4">Lipid-anchor</topology>
    </subcellularLocation>
    <subcellularLocation>
        <location evidence="3">Secreted</location>
        <location evidence="3">Cell wall</location>
    </subcellularLocation>
</comment>
<comment type="disruption phenotype">
    <text evidence="3">Increased antibiotic susceptibility, altered colony morphology and increased aggregation, increased uptake of the Congo Red stain and increased sensitivity to SDS. Decreased gliding motility and biofilm formation. Cells are very long, sometimes branched and often polyploid. Decreased phosphorylation of MtrA, increased expression of dnaA in early growth stages.</text>
</comment>
<comment type="similarity">
    <text evidence="1">Belongs to the LpqB lipoprotein family.</text>
</comment>
<feature type="signal peptide" evidence="1">
    <location>
        <begin position="1"/>
        <end position="18"/>
    </location>
</feature>
<feature type="chain" id="PRO_0000286723" description="Lipoprotein LpqB">
    <location>
        <begin position="19"/>
        <end position="585"/>
    </location>
</feature>
<feature type="region of interest" description="Disordered" evidence="2">
    <location>
        <begin position="24"/>
        <end position="46"/>
    </location>
</feature>
<feature type="compositionally biased region" description="Pro residues" evidence="2">
    <location>
        <begin position="37"/>
        <end position="46"/>
    </location>
</feature>
<feature type="lipid moiety-binding region" description="N-palmitoyl cysteine" evidence="1">
    <location>
        <position position="19"/>
    </location>
</feature>
<feature type="lipid moiety-binding region" description="S-diacylglycerol cysteine" evidence="1">
    <location>
        <position position="19"/>
    </location>
</feature>
<organism>
    <name type="scientific">Mycolicibacterium smegmatis (strain ATCC 700084 / mc(2)155)</name>
    <name type="common">Mycobacterium smegmatis</name>
    <dbReference type="NCBI Taxonomy" id="246196"/>
    <lineage>
        <taxon>Bacteria</taxon>
        <taxon>Bacillati</taxon>
        <taxon>Actinomycetota</taxon>
        <taxon>Actinomycetes</taxon>
        <taxon>Mycobacteriales</taxon>
        <taxon>Mycobacteriaceae</taxon>
        <taxon>Mycolicibacterium</taxon>
    </lineage>
</organism>
<reference key="1">
    <citation type="submission" date="2006-10" db="EMBL/GenBank/DDBJ databases">
        <authorList>
            <person name="Fleischmann R.D."/>
            <person name="Dodson R.J."/>
            <person name="Haft D.H."/>
            <person name="Merkel J.S."/>
            <person name="Nelson W.C."/>
            <person name="Fraser C.M."/>
        </authorList>
    </citation>
    <scope>NUCLEOTIDE SEQUENCE [LARGE SCALE GENOMIC DNA]</scope>
    <source>
        <strain>ATCC 700084 / mc(2)155</strain>
    </source>
</reference>
<reference key="2">
    <citation type="journal article" date="2007" name="Genome Biol.">
        <title>Interrupted coding sequences in Mycobacterium smegmatis: authentic mutations or sequencing errors?</title>
        <authorList>
            <person name="Deshayes C."/>
            <person name="Perrodou E."/>
            <person name="Gallien S."/>
            <person name="Euphrasie D."/>
            <person name="Schaeffer C."/>
            <person name="Van-Dorsselaer A."/>
            <person name="Poch O."/>
            <person name="Lecompte O."/>
            <person name="Reyrat J.-M."/>
        </authorList>
    </citation>
    <scope>NUCLEOTIDE SEQUENCE [LARGE SCALE GENOMIC DNA]</scope>
    <source>
        <strain>ATCC 700084 / mc(2)155</strain>
    </source>
</reference>
<reference key="3">
    <citation type="journal article" date="2009" name="Genome Res.">
        <title>Ortho-proteogenomics: multiple proteomes investigation through orthology and a new MS-based protocol.</title>
        <authorList>
            <person name="Gallien S."/>
            <person name="Perrodou E."/>
            <person name="Carapito C."/>
            <person name="Deshayes C."/>
            <person name="Reyrat J.-M."/>
            <person name="Van Dorsselaer A."/>
            <person name="Poch O."/>
            <person name="Schaeffer C."/>
            <person name="Lecompte O."/>
        </authorList>
    </citation>
    <scope>NUCLEOTIDE SEQUENCE [LARGE SCALE GENOMIC DNA]</scope>
    <source>
        <strain>ATCC 700084 / mc(2)155</strain>
    </source>
</reference>
<reference key="4">
    <citation type="journal article" date="2010" name="Mol. Microbiol.">
        <title>A lipoprotein modulates activity of the MtrAB two-component system to provide intrinsic multidrug resistance, cytokinetic control and cell wall homeostasis in Mycobacterium.</title>
        <authorList>
            <person name="Nguyen H.T."/>
            <person name="Wolff K.A."/>
            <person name="Cartabuke R.H."/>
            <person name="Ogwang S."/>
            <person name="Nguyen L."/>
        </authorList>
    </citation>
    <scope>FUNCTION</scope>
    <scope>SUBCELLULAR LOCATION</scope>
    <scope>DISRUPTION PHENOTYPE</scope>
    <source>
        <strain>ATCC 700084 / mc(2)155</strain>
    </source>
</reference>
<evidence type="ECO:0000255" key="1">
    <source>
        <dbReference type="HAMAP-Rule" id="MF_01373"/>
    </source>
</evidence>
<evidence type="ECO:0000256" key="2">
    <source>
        <dbReference type="SAM" id="MobiDB-lite"/>
    </source>
</evidence>
<evidence type="ECO:0000269" key="3">
    <source>
    </source>
</evidence>
<evidence type="ECO:0000305" key="4">
    <source>
    </source>
</evidence>